<keyword id="KW-0067">ATP-binding</keyword>
<keyword id="KW-1003">Cell membrane</keyword>
<keyword id="KW-0418">Kinase</keyword>
<keyword id="KW-0472">Membrane</keyword>
<keyword id="KW-0547">Nucleotide-binding</keyword>
<keyword id="KW-0597">Phosphoprotein</keyword>
<keyword id="KW-1185">Reference proteome</keyword>
<keyword id="KW-0808">Transferase</keyword>
<keyword id="KW-0812">Transmembrane</keyword>
<keyword id="KW-1133">Transmembrane helix</keyword>
<keyword id="KW-0902">Two-component regulatory system</keyword>
<sequence>MIKRQKLKYKWMLITTLITFTTILLFCLIIIFFLKDTLRSSEIDEAERSSNDIANLFHSKSLSDISALDLNASLENFQEILIYDDKGRKLIQTSNDNTLAYDNKIDFKHPERIHIHRSHGINYLVITEPIRSKEFSGYSVLVHSLQNYDNLVKSLYIVALAFGLIATIITAGVSYIFSSQITKPIVTMSNKMNQIRRDGFQNKLELTTNYEETDNLIDTFNEMMYQIEESFNQQRQFVEDASHELRTPLQIIQGHLNLIQRWGKKDPAVLEESLNISIEEVNRITKLVEELLLLTKDRVNHNVLECENVDINSEIQSRVKSLQHLHPDYTFETHLATKPIQLKINRHQFEQLLLIFIDNAMKYDTEHKHIKIVTQLKNKMIMIDITDHGMGIPKADLEFIFDRFYRVDKSRARSQGGNGLGLSIAEKIVQLNGGMIQVESELQNYTTFKISFPVLN</sequence>
<evidence type="ECO:0000250" key="1"/>
<evidence type="ECO:0000255" key="2"/>
<evidence type="ECO:0000255" key="3">
    <source>
        <dbReference type="PROSITE-ProRule" id="PRU00102"/>
    </source>
</evidence>
<evidence type="ECO:0000255" key="4">
    <source>
        <dbReference type="PROSITE-ProRule" id="PRU00107"/>
    </source>
</evidence>
<organism>
    <name type="scientific">Staphylococcus epidermidis (strain ATCC 35984 / DSM 28319 / BCRC 17069 / CCUG 31568 / BM 3577 / RP62A)</name>
    <dbReference type="NCBI Taxonomy" id="176279"/>
    <lineage>
        <taxon>Bacteria</taxon>
        <taxon>Bacillati</taxon>
        <taxon>Bacillota</taxon>
        <taxon>Bacilli</taxon>
        <taxon>Bacillales</taxon>
        <taxon>Staphylococcaceae</taxon>
        <taxon>Staphylococcus</taxon>
    </lineage>
</organism>
<comment type="function">
    <text evidence="1">Member of the two-component regulatory system ArlS/ArlR. ArlS probably functions as a sensor protein kinase which is autophosphorylated at a histidine residue and transfers its phosphate group to ArlR (By similarity).</text>
</comment>
<comment type="catalytic activity">
    <reaction>
        <text>ATP + protein L-histidine = ADP + protein N-phospho-L-histidine.</text>
        <dbReference type="EC" id="2.7.13.3"/>
    </reaction>
</comment>
<comment type="subcellular location">
    <subcellularLocation>
        <location evidence="1">Cell membrane</location>
        <topology evidence="1">Multi-pass membrane protein</topology>
    </subcellularLocation>
</comment>
<comment type="PTM">
    <text evidence="1">Autophosphorylated.</text>
</comment>
<dbReference type="EC" id="2.7.13.3"/>
<dbReference type="EMBL" id="CP000029">
    <property type="protein sequence ID" value="AAW54342.1"/>
    <property type="molecule type" value="Genomic_DNA"/>
</dbReference>
<dbReference type="RefSeq" id="WP_002446426.1">
    <property type="nucleotide sequence ID" value="NC_002976.3"/>
</dbReference>
<dbReference type="SMR" id="Q5HPC4"/>
<dbReference type="STRING" id="176279.SERP0988"/>
<dbReference type="KEGG" id="ser:SERP0988"/>
<dbReference type="eggNOG" id="COG5002">
    <property type="taxonomic scope" value="Bacteria"/>
</dbReference>
<dbReference type="HOGENOM" id="CLU_000445_89_6_9"/>
<dbReference type="Proteomes" id="UP000000531">
    <property type="component" value="Chromosome"/>
</dbReference>
<dbReference type="GO" id="GO:0005886">
    <property type="term" value="C:plasma membrane"/>
    <property type="evidence" value="ECO:0007669"/>
    <property type="project" value="UniProtKB-SubCell"/>
</dbReference>
<dbReference type="GO" id="GO:0005524">
    <property type="term" value="F:ATP binding"/>
    <property type="evidence" value="ECO:0007669"/>
    <property type="project" value="UniProtKB-KW"/>
</dbReference>
<dbReference type="GO" id="GO:0000155">
    <property type="term" value="F:phosphorelay sensor kinase activity"/>
    <property type="evidence" value="ECO:0007669"/>
    <property type="project" value="InterPro"/>
</dbReference>
<dbReference type="CDD" id="cd00075">
    <property type="entry name" value="HATPase"/>
    <property type="match status" value="1"/>
</dbReference>
<dbReference type="CDD" id="cd00082">
    <property type="entry name" value="HisKA"/>
    <property type="match status" value="1"/>
</dbReference>
<dbReference type="FunFam" id="3.30.565.10:FF:000006">
    <property type="entry name" value="Sensor histidine kinase WalK"/>
    <property type="match status" value="1"/>
</dbReference>
<dbReference type="FunFam" id="1.10.287.130:FF:000001">
    <property type="entry name" value="Two-component sensor histidine kinase"/>
    <property type="match status" value="1"/>
</dbReference>
<dbReference type="Gene3D" id="1.10.287.130">
    <property type="match status" value="1"/>
</dbReference>
<dbReference type="Gene3D" id="6.10.340.10">
    <property type="match status" value="1"/>
</dbReference>
<dbReference type="Gene3D" id="3.30.565.10">
    <property type="entry name" value="Histidine kinase-like ATPase, C-terminal domain"/>
    <property type="match status" value="1"/>
</dbReference>
<dbReference type="InterPro" id="IPR041610">
    <property type="entry name" value="ArlS_N"/>
</dbReference>
<dbReference type="InterPro" id="IPR050398">
    <property type="entry name" value="Bact_Sensor_His_Kinase"/>
</dbReference>
<dbReference type="InterPro" id="IPR003660">
    <property type="entry name" value="HAMP_dom"/>
</dbReference>
<dbReference type="InterPro" id="IPR036890">
    <property type="entry name" value="HATPase_C_sf"/>
</dbReference>
<dbReference type="InterPro" id="IPR005467">
    <property type="entry name" value="His_kinase_dom"/>
</dbReference>
<dbReference type="InterPro" id="IPR003661">
    <property type="entry name" value="HisK_dim/P_dom"/>
</dbReference>
<dbReference type="InterPro" id="IPR036097">
    <property type="entry name" value="HisK_dim/P_sf"/>
</dbReference>
<dbReference type="InterPro" id="IPR004358">
    <property type="entry name" value="Sig_transdc_His_kin-like_C"/>
</dbReference>
<dbReference type="PANTHER" id="PTHR45528">
    <property type="entry name" value="SENSOR HISTIDINE KINASE CPXA"/>
    <property type="match status" value="1"/>
</dbReference>
<dbReference type="PANTHER" id="PTHR45528:SF1">
    <property type="entry name" value="SENSOR HISTIDINE KINASE CPXA"/>
    <property type="match status" value="1"/>
</dbReference>
<dbReference type="Pfam" id="PF18719">
    <property type="entry name" value="ArlS_N"/>
    <property type="match status" value="1"/>
</dbReference>
<dbReference type="Pfam" id="PF02518">
    <property type="entry name" value="HATPase_c"/>
    <property type="match status" value="1"/>
</dbReference>
<dbReference type="Pfam" id="PF00512">
    <property type="entry name" value="HisKA"/>
    <property type="match status" value="1"/>
</dbReference>
<dbReference type="PRINTS" id="PR00344">
    <property type="entry name" value="BCTRLSENSOR"/>
</dbReference>
<dbReference type="SMART" id="SM00387">
    <property type="entry name" value="HATPase_c"/>
    <property type="match status" value="1"/>
</dbReference>
<dbReference type="SMART" id="SM00388">
    <property type="entry name" value="HisKA"/>
    <property type="match status" value="1"/>
</dbReference>
<dbReference type="SUPFAM" id="SSF55874">
    <property type="entry name" value="ATPase domain of HSP90 chaperone/DNA topoisomerase II/histidine kinase"/>
    <property type="match status" value="1"/>
</dbReference>
<dbReference type="SUPFAM" id="SSF158472">
    <property type="entry name" value="HAMP domain-like"/>
    <property type="match status" value="1"/>
</dbReference>
<dbReference type="SUPFAM" id="SSF47384">
    <property type="entry name" value="Homodimeric domain of signal transducing histidine kinase"/>
    <property type="match status" value="1"/>
</dbReference>
<dbReference type="PROSITE" id="PS50885">
    <property type="entry name" value="HAMP"/>
    <property type="match status" value="1"/>
</dbReference>
<dbReference type="PROSITE" id="PS50109">
    <property type="entry name" value="HIS_KIN"/>
    <property type="match status" value="1"/>
</dbReference>
<reference key="1">
    <citation type="journal article" date="2005" name="J. Bacteriol.">
        <title>Insights on evolution of virulence and resistance from the complete genome analysis of an early methicillin-resistant Staphylococcus aureus strain and a biofilm-producing methicillin-resistant Staphylococcus epidermidis strain.</title>
        <authorList>
            <person name="Gill S.R."/>
            <person name="Fouts D.E."/>
            <person name="Archer G.L."/>
            <person name="Mongodin E.F."/>
            <person name="DeBoy R.T."/>
            <person name="Ravel J."/>
            <person name="Paulsen I.T."/>
            <person name="Kolonay J.F."/>
            <person name="Brinkac L.M."/>
            <person name="Beanan M.J."/>
            <person name="Dodson R.J."/>
            <person name="Daugherty S.C."/>
            <person name="Madupu R."/>
            <person name="Angiuoli S.V."/>
            <person name="Durkin A.S."/>
            <person name="Haft D.H."/>
            <person name="Vamathevan J.J."/>
            <person name="Khouri H."/>
            <person name="Utterback T.R."/>
            <person name="Lee C."/>
            <person name="Dimitrov G."/>
            <person name="Jiang L."/>
            <person name="Qin H."/>
            <person name="Weidman J."/>
            <person name="Tran K."/>
            <person name="Kang K.H."/>
            <person name="Hance I.R."/>
            <person name="Nelson K.E."/>
            <person name="Fraser C.M."/>
        </authorList>
    </citation>
    <scope>NUCLEOTIDE SEQUENCE [LARGE SCALE GENOMIC DNA]</scope>
    <source>
        <strain>ATCC 35984 / DSM 28319 / BCRC 17069 / CCUG 31568 / BM 3577 / RP62A</strain>
    </source>
</reference>
<proteinExistence type="inferred from homology"/>
<name>ARLS_STAEQ</name>
<accession>Q5HPC4</accession>
<protein>
    <recommendedName>
        <fullName>Signal transduction histidine-protein kinase ArlS</fullName>
        <ecNumber>2.7.13.3</ecNumber>
    </recommendedName>
</protein>
<gene>
    <name type="primary">arlS</name>
    <name type="ordered locus">SERP0988</name>
</gene>
<feature type="chain" id="PRO_0000293450" description="Signal transduction histidine-protein kinase ArlS">
    <location>
        <begin position="1"/>
        <end position="456"/>
    </location>
</feature>
<feature type="transmembrane region" description="Helical" evidence="2">
    <location>
        <begin position="13"/>
        <end position="33"/>
    </location>
</feature>
<feature type="transmembrane region" description="Helical" evidence="2">
    <location>
        <begin position="157"/>
        <end position="177"/>
    </location>
</feature>
<feature type="domain" description="HAMP" evidence="3">
    <location>
        <begin position="179"/>
        <end position="232"/>
    </location>
</feature>
<feature type="domain" description="Histidine kinase" evidence="4">
    <location>
        <begin position="240"/>
        <end position="456"/>
    </location>
</feature>
<feature type="modified residue" description="Phosphohistidine; by autocatalysis" evidence="4">
    <location>
        <position position="243"/>
    </location>
</feature>